<protein>
    <recommendedName>
        <fullName evidence="1">Proline--tRNA ligase</fullName>
        <ecNumber evidence="1">6.1.1.15</ecNumber>
    </recommendedName>
    <alternativeName>
        <fullName evidence="1">Prolyl-tRNA synthetase</fullName>
        <shortName evidence="1">ProRS</shortName>
    </alternativeName>
</protein>
<reference key="1">
    <citation type="journal article" date="2011" name="MBio">
        <title>Novel metabolic attributes of the genus Cyanothece, comprising a group of unicellular nitrogen-fixing Cyanobacteria.</title>
        <authorList>
            <person name="Bandyopadhyay A."/>
            <person name="Elvitigala T."/>
            <person name="Welsh E."/>
            <person name="Stockel J."/>
            <person name="Liberton M."/>
            <person name="Min H."/>
            <person name="Sherman L.A."/>
            <person name="Pakrasi H.B."/>
        </authorList>
    </citation>
    <scope>NUCLEOTIDE SEQUENCE [LARGE SCALE GENOMIC DNA]</scope>
    <source>
        <strain>PCC 8801 / RF-1</strain>
    </source>
</reference>
<keyword id="KW-0030">Aminoacyl-tRNA synthetase</keyword>
<keyword id="KW-0067">ATP-binding</keyword>
<keyword id="KW-0963">Cytoplasm</keyword>
<keyword id="KW-0436">Ligase</keyword>
<keyword id="KW-0547">Nucleotide-binding</keyword>
<keyword id="KW-0648">Protein biosynthesis</keyword>
<keyword id="KW-1185">Reference proteome</keyword>
<sequence length="598" mass="66811">MRLSQMLFVTLREDPAEAEIPSHKLLLRAGYIRRIGSGIYAYLPLMWRVLQKVSQIVREEMNAAGAQECLLPQLQPAELWRESGRWETYTKAEGIMFSLIDRRDTELGLGPTHEEVITTIAKEMIRSYRQLPVNLYQIQSKFRDEIRPRFGLMRGREFIMKDAYSFHASEDSLKETYQAMDQAYRNMITRCGLEFRAVQADSGAIGGSASQEFMILAEAGEDEVLYTEDGKYAANVEKAVSLPPDAELSPFTTPEKRETPNTNTIEKLCQFLQCSATAIVKNVLYQAVYDNGKTVLVLVSIRGDQDVNDVKLTNELVRLAPQYQATTLLALQVPDETAQAKWAAKPLPLGYIAPNLEDNYISSIPDITPKFLRLVDKTAVELKNFITGANESGYHQVGANWGQEFVLPSLVVDVRKAMAGDRAVHDPIQTLQTARGIEVGHIFQLGVKYSQAMGATFTNEQGEEKPLIMGCYGVGVSRLAQAAVEQSYDKDGIIWPVAIAPYHAVVVIPNINDAQQVEVAEKLYTELNKVGVETLLDDRDERAGVKFKDAELIGIPYRIVTGRSLQSGKVELVERSTKNSQEIAIDQVVETLKKLINV</sequence>
<feature type="chain" id="PRO_1000199371" description="Proline--tRNA ligase">
    <location>
        <begin position="1"/>
        <end position="598"/>
    </location>
</feature>
<comment type="function">
    <text evidence="1">Catalyzes the attachment of proline to tRNA(Pro) in a two-step reaction: proline is first activated by ATP to form Pro-AMP and then transferred to the acceptor end of tRNA(Pro). As ProRS can inadvertently accommodate and process non-cognate amino acids such as alanine and cysteine, to avoid such errors it has two additional distinct editing activities against alanine. One activity is designated as 'pretransfer' editing and involves the tRNA(Pro)-independent hydrolysis of activated Ala-AMP. The other activity is designated 'posttransfer' editing and involves deacylation of mischarged Ala-tRNA(Pro). The misacylated Cys-tRNA(Pro) is not edited by ProRS.</text>
</comment>
<comment type="catalytic activity">
    <reaction evidence="1">
        <text>tRNA(Pro) + L-proline + ATP = L-prolyl-tRNA(Pro) + AMP + diphosphate</text>
        <dbReference type="Rhea" id="RHEA:14305"/>
        <dbReference type="Rhea" id="RHEA-COMP:9700"/>
        <dbReference type="Rhea" id="RHEA-COMP:9702"/>
        <dbReference type="ChEBI" id="CHEBI:30616"/>
        <dbReference type="ChEBI" id="CHEBI:33019"/>
        <dbReference type="ChEBI" id="CHEBI:60039"/>
        <dbReference type="ChEBI" id="CHEBI:78442"/>
        <dbReference type="ChEBI" id="CHEBI:78532"/>
        <dbReference type="ChEBI" id="CHEBI:456215"/>
        <dbReference type="EC" id="6.1.1.15"/>
    </reaction>
</comment>
<comment type="subunit">
    <text evidence="1">Homodimer.</text>
</comment>
<comment type="subcellular location">
    <subcellularLocation>
        <location evidence="1">Cytoplasm</location>
    </subcellularLocation>
</comment>
<comment type="domain">
    <text evidence="1">Consists of three domains: the N-terminal catalytic domain, the editing domain and the C-terminal anticodon-binding domain.</text>
</comment>
<comment type="similarity">
    <text evidence="1">Belongs to the class-II aminoacyl-tRNA synthetase family. ProS type 1 subfamily.</text>
</comment>
<name>SYP_RIPO1</name>
<proteinExistence type="inferred from homology"/>
<organism>
    <name type="scientific">Rippkaea orientalis (strain PCC 8801 / RF-1)</name>
    <name type="common">Cyanothece sp. (strain PCC 8801)</name>
    <dbReference type="NCBI Taxonomy" id="41431"/>
    <lineage>
        <taxon>Bacteria</taxon>
        <taxon>Bacillati</taxon>
        <taxon>Cyanobacteriota</taxon>
        <taxon>Cyanophyceae</taxon>
        <taxon>Oscillatoriophycideae</taxon>
        <taxon>Chroococcales</taxon>
        <taxon>Aphanothecaceae</taxon>
        <taxon>Rippkaea</taxon>
        <taxon>Rippkaea orientalis</taxon>
    </lineage>
</organism>
<evidence type="ECO:0000255" key="1">
    <source>
        <dbReference type="HAMAP-Rule" id="MF_01569"/>
    </source>
</evidence>
<gene>
    <name evidence="1" type="primary">proS</name>
    <name type="ordered locus">PCC8801_3553</name>
</gene>
<dbReference type="EC" id="6.1.1.15" evidence="1"/>
<dbReference type="EMBL" id="CP001287">
    <property type="protein sequence ID" value="ACK67517.1"/>
    <property type="molecule type" value="Genomic_DNA"/>
</dbReference>
<dbReference type="RefSeq" id="WP_012596775.1">
    <property type="nucleotide sequence ID" value="NC_011726.1"/>
</dbReference>
<dbReference type="SMR" id="B7K1H5"/>
<dbReference type="STRING" id="41431.PCC8801_3553"/>
<dbReference type="KEGG" id="cyp:PCC8801_3553"/>
<dbReference type="eggNOG" id="COG0442">
    <property type="taxonomic scope" value="Bacteria"/>
</dbReference>
<dbReference type="HOGENOM" id="CLU_016739_0_0_3"/>
<dbReference type="OrthoDB" id="9809052at2"/>
<dbReference type="Proteomes" id="UP000008204">
    <property type="component" value="Chromosome"/>
</dbReference>
<dbReference type="GO" id="GO:0005829">
    <property type="term" value="C:cytosol"/>
    <property type="evidence" value="ECO:0007669"/>
    <property type="project" value="TreeGrafter"/>
</dbReference>
<dbReference type="GO" id="GO:0002161">
    <property type="term" value="F:aminoacyl-tRNA deacylase activity"/>
    <property type="evidence" value="ECO:0007669"/>
    <property type="project" value="InterPro"/>
</dbReference>
<dbReference type="GO" id="GO:0005524">
    <property type="term" value="F:ATP binding"/>
    <property type="evidence" value="ECO:0007669"/>
    <property type="project" value="UniProtKB-UniRule"/>
</dbReference>
<dbReference type="GO" id="GO:0004827">
    <property type="term" value="F:proline-tRNA ligase activity"/>
    <property type="evidence" value="ECO:0007669"/>
    <property type="project" value="UniProtKB-UniRule"/>
</dbReference>
<dbReference type="GO" id="GO:0006433">
    <property type="term" value="P:prolyl-tRNA aminoacylation"/>
    <property type="evidence" value="ECO:0007669"/>
    <property type="project" value="UniProtKB-UniRule"/>
</dbReference>
<dbReference type="CDD" id="cd04334">
    <property type="entry name" value="ProRS-INS"/>
    <property type="match status" value="1"/>
</dbReference>
<dbReference type="CDD" id="cd00861">
    <property type="entry name" value="ProRS_anticodon_short"/>
    <property type="match status" value="1"/>
</dbReference>
<dbReference type="CDD" id="cd00779">
    <property type="entry name" value="ProRS_core_prok"/>
    <property type="match status" value="1"/>
</dbReference>
<dbReference type="FunFam" id="3.40.50.800:FF:000011">
    <property type="entry name" value="Proline--tRNA ligase"/>
    <property type="match status" value="1"/>
</dbReference>
<dbReference type="Gene3D" id="3.40.50.800">
    <property type="entry name" value="Anticodon-binding domain"/>
    <property type="match status" value="1"/>
</dbReference>
<dbReference type="Gene3D" id="3.30.930.10">
    <property type="entry name" value="Bira Bifunctional Protein, Domain 2"/>
    <property type="match status" value="2"/>
</dbReference>
<dbReference type="HAMAP" id="MF_01569">
    <property type="entry name" value="Pro_tRNA_synth_type1"/>
    <property type="match status" value="1"/>
</dbReference>
<dbReference type="InterPro" id="IPR002314">
    <property type="entry name" value="aa-tRNA-synt_IIb"/>
</dbReference>
<dbReference type="InterPro" id="IPR006195">
    <property type="entry name" value="aa-tRNA-synth_II"/>
</dbReference>
<dbReference type="InterPro" id="IPR045864">
    <property type="entry name" value="aa-tRNA-synth_II/BPL/LPL"/>
</dbReference>
<dbReference type="InterPro" id="IPR004154">
    <property type="entry name" value="Anticodon-bd"/>
</dbReference>
<dbReference type="InterPro" id="IPR036621">
    <property type="entry name" value="Anticodon-bd_dom_sf"/>
</dbReference>
<dbReference type="InterPro" id="IPR002316">
    <property type="entry name" value="Pro-tRNA-ligase_IIa"/>
</dbReference>
<dbReference type="InterPro" id="IPR004500">
    <property type="entry name" value="Pro-tRNA-synth_IIa_bac-type"/>
</dbReference>
<dbReference type="InterPro" id="IPR023717">
    <property type="entry name" value="Pro-tRNA-Synthase_IIa_type1"/>
</dbReference>
<dbReference type="InterPro" id="IPR050062">
    <property type="entry name" value="Pro-tRNA_synthetase"/>
</dbReference>
<dbReference type="InterPro" id="IPR044140">
    <property type="entry name" value="ProRS_anticodon_short"/>
</dbReference>
<dbReference type="InterPro" id="IPR033730">
    <property type="entry name" value="ProRS_core_prok"/>
</dbReference>
<dbReference type="InterPro" id="IPR036754">
    <property type="entry name" value="YbaK/aa-tRNA-synt-asso_dom_sf"/>
</dbReference>
<dbReference type="InterPro" id="IPR007214">
    <property type="entry name" value="YbaK/aa-tRNA-synth-assoc-dom"/>
</dbReference>
<dbReference type="NCBIfam" id="NF006625">
    <property type="entry name" value="PRK09194.1"/>
    <property type="match status" value="1"/>
</dbReference>
<dbReference type="NCBIfam" id="TIGR00409">
    <property type="entry name" value="proS_fam_II"/>
    <property type="match status" value="1"/>
</dbReference>
<dbReference type="PANTHER" id="PTHR42753">
    <property type="entry name" value="MITOCHONDRIAL RIBOSOME PROTEIN L39/PROLYL-TRNA LIGASE FAMILY MEMBER"/>
    <property type="match status" value="1"/>
</dbReference>
<dbReference type="PANTHER" id="PTHR42753:SF2">
    <property type="entry name" value="PROLINE--TRNA LIGASE"/>
    <property type="match status" value="1"/>
</dbReference>
<dbReference type="Pfam" id="PF03129">
    <property type="entry name" value="HGTP_anticodon"/>
    <property type="match status" value="1"/>
</dbReference>
<dbReference type="Pfam" id="PF00587">
    <property type="entry name" value="tRNA-synt_2b"/>
    <property type="match status" value="1"/>
</dbReference>
<dbReference type="Pfam" id="PF04073">
    <property type="entry name" value="tRNA_edit"/>
    <property type="match status" value="1"/>
</dbReference>
<dbReference type="PRINTS" id="PR01046">
    <property type="entry name" value="TRNASYNTHPRO"/>
</dbReference>
<dbReference type="SUPFAM" id="SSF52954">
    <property type="entry name" value="Class II aaRS ABD-related"/>
    <property type="match status" value="1"/>
</dbReference>
<dbReference type="SUPFAM" id="SSF55681">
    <property type="entry name" value="Class II aaRS and biotin synthetases"/>
    <property type="match status" value="1"/>
</dbReference>
<dbReference type="SUPFAM" id="SSF55826">
    <property type="entry name" value="YbaK/ProRS associated domain"/>
    <property type="match status" value="1"/>
</dbReference>
<dbReference type="PROSITE" id="PS50862">
    <property type="entry name" value="AA_TRNA_LIGASE_II"/>
    <property type="match status" value="1"/>
</dbReference>
<accession>B7K1H5</accession>